<organism>
    <name type="scientific">Homo sapiens</name>
    <name type="common">Human</name>
    <dbReference type="NCBI Taxonomy" id="9606"/>
    <lineage>
        <taxon>Eukaryota</taxon>
        <taxon>Metazoa</taxon>
        <taxon>Chordata</taxon>
        <taxon>Craniata</taxon>
        <taxon>Vertebrata</taxon>
        <taxon>Euteleostomi</taxon>
        <taxon>Mammalia</taxon>
        <taxon>Eutheria</taxon>
        <taxon>Euarchontoglires</taxon>
        <taxon>Primates</taxon>
        <taxon>Haplorrhini</taxon>
        <taxon>Catarrhini</taxon>
        <taxon>Hominidae</taxon>
        <taxon>Homo</taxon>
    </lineage>
</organism>
<proteinExistence type="evidence at protein level"/>
<evidence type="ECO:0000250" key="1">
    <source>
        <dbReference type="UniProtKB" id="O35609"/>
    </source>
</evidence>
<evidence type="ECO:0000255" key="2"/>
<evidence type="ECO:0000256" key="3">
    <source>
        <dbReference type="SAM" id="MobiDB-lite"/>
    </source>
</evidence>
<evidence type="ECO:0000269" key="4">
    <source>
    </source>
</evidence>
<evidence type="ECO:0000269" key="5">
    <source>
    </source>
</evidence>
<evidence type="ECO:0000269" key="6">
    <source>
    </source>
</evidence>
<evidence type="ECO:0000303" key="7">
    <source>
    </source>
</evidence>
<evidence type="ECO:0000305" key="8"/>
<evidence type="ECO:0007744" key="9">
    <source>
    </source>
</evidence>
<evidence type="ECO:0007744" key="10">
    <source>
    </source>
</evidence>
<evidence type="ECO:0007744" key="11">
    <source>
    </source>
</evidence>
<evidence type="ECO:0007744" key="12">
    <source>
    </source>
</evidence>
<evidence type="ECO:0007744" key="13">
    <source>
    </source>
</evidence>
<evidence type="ECO:0007744" key="14">
    <source>
    </source>
</evidence>
<evidence type="ECO:0007744" key="15">
    <source>
    </source>
</evidence>
<evidence type="ECO:0007744" key="16">
    <source>
    </source>
</evidence>
<evidence type="ECO:0007744" key="17">
    <source>
    </source>
</evidence>
<protein>
    <recommendedName>
        <fullName>Secretory carrier-associated membrane protein 3</fullName>
        <shortName>Secretory carrier membrane protein 3</shortName>
    </recommendedName>
</protein>
<name>SCAM3_HUMAN</name>
<sequence>MAQSRDGGNPFAEPSELDNPFQDPAVIQHRPSRQYATLDVYNPFETREPPPAYEPPAPAPLPPPSAPSLQPSRKLSPTEPKNYGSYSTQASAAAATAELLKKQEELNRKAEELDRRERELQHAALGGTATRQNNWPPLPSFCPVQPCFFQDISMEIPQEFQKTVSTMYYLWMCSTLALLLNFLACLASFCVETNNGAGFGLSILWVLLFTPCSFVCWYRPMYKAFRSDSSFNFFVFFFIFFVQDVLFVLQAIGIPGWGFSGWISALVVPKGNTAVSVLMLLVALLFTGIAVLGIVMLKRIHSLYRRTGASFQKAQQEFAAGVFSNPAVRTAAANAAAGAAENAFRAP</sequence>
<dbReference type="EMBL" id="AF023268">
    <property type="protein sequence ID" value="AAC51821.1"/>
    <property type="molecule type" value="Genomic_DNA"/>
</dbReference>
<dbReference type="EMBL" id="AF005039">
    <property type="protein sequence ID" value="AAB62724.1"/>
    <property type="molecule type" value="mRNA"/>
</dbReference>
<dbReference type="EMBL" id="AL713999">
    <property type="status" value="NOT_ANNOTATED_CDS"/>
    <property type="molecule type" value="Genomic_DNA"/>
</dbReference>
<dbReference type="EMBL" id="CH471121">
    <property type="protein sequence ID" value="EAW53090.1"/>
    <property type="molecule type" value="Genomic_DNA"/>
</dbReference>
<dbReference type="EMBL" id="CH471121">
    <property type="protein sequence ID" value="EAW53092.1"/>
    <property type="molecule type" value="Genomic_DNA"/>
</dbReference>
<dbReference type="EMBL" id="BC000161">
    <property type="protein sequence ID" value="AAH00161.1"/>
    <property type="molecule type" value="mRNA"/>
</dbReference>
<dbReference type="EMBL" id="BC005135">
    <property type="protein sequence ID" value="AAH05135.1"/>
    <property type="molecule type" value="mRNA"/>
</dbReference>
<dbReference type="EMBL" id="BC010505">
    <property type="protein sequence ID" value="AAH10505.1"/>
    <property type="molecule type" value="mRNA"/>
</dbReference>
<dbReference type="CCDS" id="CCDS1105.1">
    <molecule id="O14828-1"/>
</dbReference>
<dbReference type="CCDS" id="CCDS1106.1">
    <molecule id="O14828-2"/>
</dbReference>
<dbReference type="PIR" id="T08826">
    <property type="entry name" value="T08826"/>
</dbReference>
<dbReference type="RefSeq" id="NP_005689.2">
    <molecule id="O14828-1"/>
    <property type="nucleotide sequence ID" value="NM_005698.3"/>
</dbReference>
<dbReference type="RefSeq" id="NP_443069.1">
    <molecule id="O14828-2"/>
    <property type="nucleotide sequence ID" value="NM_052837.3"/>
</dbReference>
<dbReference type="BioGRID" id="115378">
    <property type="interactions" value="257"/>
</dbReference>
<dbReference type="CORUM" id="O14828"/>
<dbReference type="ELM" id="O14828"/>
<dbReference type="FunCoup" id="O14828">
    <property type="interactions" value="2485"/>
</dbReference>
<dbReference type="IntAct" id="O14828">
    <property type="interactions" value="122"/>
</dbReference>
<dbReference type="MINT" id="O14828"/>
<dbReference type="STRING" id="9606.ENSP00000307275"/>
<dbReference type="TCDB" id="8.A.103.1.3">
    <property type="family name" value="the secretory carrier-associated membrane protein (scamp) family"/>
</dbReference>
<dbReference type="GlyGen" id="O14828">
    <property type="glycosylation" value="1 site, 1 O-linked glycan (1 site)"/>
</dbReference>
<dbReference type="iPTMnet" id="O14828"/>
<dbReference type="PhosphoSitePlus" id="O14828"/>
<dbReference type="SwissPalm" id="O14828"/>
<dbReference type="BioMuta" id="SCAMP3"/>
<dbReference type="jPOST" id="O14828"/>
<dbReference type="MassIVE" id="O14828"/>
<dbReference type="PaxDb" id="9606-ENSP00000307275"/>
<dbReference type="PeptideAtlas" id="O14828"/>
<dbReference type="ProteomicsDB" id="48259">
    <molecule id="O14828-1"/>
</dbReference>
<dbReference type="ProteomicsDB" id="48260">
    <molecule id="O14828-2"/>
</dbReference>
<dbReference type="Pumba" id="O14828"/>
<dbReference type="Antibodypedia" id="20415">
    <property type="antibodies" value="141 antibodies from 25 providers"/>
</dbReference>
<dbReference type="CPTC" id="O14828">
    <property type="antibodies" value="1 antibody"/>
</dbReference>
<dbReference type="DNASU" id="10067"/>
<dbReference type="Ensembl" id="ENST00000302631.8">
    <molecule id="O14828-1"/>
    <property type="protein sequence ID" value="ENSP00000307275.3"/>
    <property type="gene ID" value="ENSG00000116521.12"/>
</dbReference>
<dbReference type="Ensembl" id="ENST00000355379.3">
    <molecule id="O14828-2"/>
    <property type="protein sequence ID" value="ENSP00000347540.3"/>
    <property type="gene ID" value="ENSG00000116521.12"/>
</dbReference>
<dbReference type="Ensembl" id="ENST00000570831.5">
    <molecule id="O14828-1"/>
    <property type="protein sequence ID" value="ENSP00000461521.1"/>
    <property type="gene ID" value="ENSG00000263290.5"/>
</dbReference>
<dbReference type="Ensembl" id="ENST00000573013.1">
    <molecule id="O14828-2"/>
    <property type="protein sequence ID" value="ENSP00000458542.1"/>
    <property type="gene ID" value="ENSG00000263290.5"/>
</dbReference>
<dbReference type="GeneID" id="10067"/>
<dbReference type="KEGG" id="hsa:10067"/>
<dbReference type="MANE-Select" id="ENST00000302631.8">
    <property type="protein sequence ID" value="ENSP00000307275.3"/>
    <property type="RefSeq nucleotide sequence ID" value="NM_005698.4"/>
    <property type="RefSeq protein sequence ID" value="NP_005689.2"/>
</dbReference>
<dbReference type="UCSC" id="uc001fjs.4">
    <molecule id="O14828-1"/>
    <property type="organism name" value="human"/>
</dbReference>
<dbReference type="AGR" id="HGNC:10565"/>
<dbReference type="CTD" id="10067"/>
<dbReference type="DisGeNET" id="10067"/>
<dbReference type="GeneCards" id="SCAMP3"/>
<dbReference type="HGNC" id="HGNC:10565">
    <property type="gene designation" value="SCAMP3"/>
</dbReference>
<dbReference type="HPA" id="ENSG00000116521">
    <property type="expression patterns" value="Low tissue specificity"/>
</dbReference>
<dbReference type="MIM" id="606913">
    <property type="type" value="gene"/>
</dbReference>
<dbReference type="neXtProt" id="NX_O14828"/>
<dbReference type="OpenTargets" id="ENSG00000116521"/>
<dbReference type="PharmGKB" id="PA34978"/>
<dbReference type="VEuPathDB" id="HostDB:ENSG00000116521"/>
<dbReference type="eggNOG" id="KOG3088">
    <property type="taxonomic scope" value="Eukaryota"/>
</dbReference>
<dbReference type="GeneTree" id="ENSGT00940000160917"/>
<dbReference type="HOGENOM" id="CLU_066546_0_0_1"/>
<dbReference type="InParanoid" id="O14828"/>
<dbReference type="OMA" id="IFFAQVC"/>
<dbReference type="OrthoDB" id="1924787at2759"/>
<dbReference type="PAN-GO" id="O14828">
    <property type="GO annotations" value="3 GO annotations based on evolutionary models"/>
</dbReference>
<dbReference type="PhylomeDB" id="O14828"/>
<dbReference type="TreeFam" id="TF313797"/>
<dbReference type="PathwayCommons" id="O14828"/>
<dbReference type="SignaLink" id="O14828"/>
<dbReference type="SIGNOR" id="O14828"/>
<dbReference type="BioGRID-ORCS" id="10067">
    <property type="hits" value="17 hits in 1148 CRISPR screens"/>
</dbReference>
<dbReference type="ChiTaRS" id="SCAMP3">
    <property type="organism name" value="human"/>
</dbReference>
<dbReference type="GeneWiki" id="SCAMP3"/>
<dbReference type="GenomeRNAi" id="10067"/>
<dbReference type="Pharos" id="O14828">
    <property type="development level" value="Tbio"/>
</dbReference>
<dbReference type="PRO" id="PR:O14828"/>
<dbReference type="Proteomes" id="UP000005640">
    <property type="component" value="Chromosome 1"/>
</dbReference>
<dbReference type="RNAct" id="O14828">
    <property type="molecule type" value="protein"/>
</dbReference>
<dbReference type="Bgee" id="ENSG00000116521">
    <property type="expression patterns" value="Expressed in right adrenal gland cortex and 96 other cell types or tissues"/>
</dbReference>
<dbReference type="GO" id="GO:0070062">
    <property type="term" value="C:extracellular exosome"/>
    <property type="evidence" value="ECO:0007005"/>
    <property type="project" value="UniProtKB"/>
</dbReference>
<dbReference type="GO" id="GO:0043231">
    <property type="term" value="C:intracellular membrane-bounded organelle"/>
    <property type="evidence" value="ECO:0000314"/>
    <property type="project" value="HPA"/>
</dbReference>
<dbReference type="GO" id="GO:0055038">
    <property type="term" value="C:recycling endosome membrane"/>
    <property type="evidence" value="ECO:0000318"/>
    <property type="project" value="GO_Central"/>
</dbReference>
<dbReference type="GO" id="GO:0032588">
    <property type="term" value="C:trans-Golgi network membrane"/>
    <property type="evidence" value="ECO:0000318"/>
    <property type="project" value="GO_Central"/>
</dbReference>
<dbReference type="GO" id="GO:0031625">
    <property type="term" value="F:ubiquitin protein ligase binding"/>
    <property type="evidence" value="ECO:0000353"/>
    <property type="project" value="UniProtKB"/>
</dbReference>
<dbReference type="GO" id="GO:0006892">
    <property type="term" value="P:post-Golgi vesicle-mediated transport"/>
    <property type="evidence" value="ECO:0000304"/>
    <property type="project" value="ProtInc"/>
</dbReference>
<dbReference type="GO" id="GO:0015031">
    <property type="term" value="P:protein transport"/>
    <property type="evidence" value="ECO:0000318"/>
    <property type="project" value="GO_Central"/>
</dbReference>
<dbReference type="InterPro" id="IPR007273">
    <property type="entry name" value="SCAMP"/>
</dbReference>
<dbReference type="PANTHER" id="PTHR10687:SF6">
    <property type="entry name" value="SECRETORY CARRIER-ASSOCIATED MEMBRANE PROTEIN 3"/>
    <property type="match status" value="1"/>
</dbReference>
<dbReference type="PANTHER" id="PTHR10687">
    <property type="entry name" value="SECRETORY CARRIER-ASSOCIATED MEMBRANE PROTEIN SCAMP"/>
    <property type="match status" value="1"/>
</dbReference>
<dbReference type="Pfam" id="PF04144">
    <property type="entry name" value="SCAMP"/>
    <property type="match status" value="1"/>
</dbReference>
<keyword id="KW-0025">Alternative splicing</keyword>
<keyword id="KW-1017">Isopeptide bond</keyword>
<keyword id="KW-0472">Membrane</keyword>
<keyword id="KW-0597">Phosphoprotein</keyword>
<keyword id="KW-0653">Protein transport</keyword>
<keyword id="KW-1267">Proteomics identification</keyword>
<keyword id="KW-1185">Reference proteome</keyword>
<keyword id="KW-0812">Transmembrane</keyword>
<keyword id="KW-1133">Transmembrane helix</keyword>
<keyword id="KW-0813">Transport</keyword>
<keyword id="KW-0832">Ubl conjugation</keyword>
<reference key="1">
    <citation type="journal article" date="1997" name="Genome Res.">
        <title>Identification of three additional genes contiguous to the glucocerebrosidase locus on chromosome 1q21: implications for Gaucher disease.</title>
        <authorList>
            <person name="Winfield S.L."/>
            <person name="Tayebi N."/>
            <person name="Martin B.M."/>
            <person name="Ginns E.I."/>
            <person name="Sidransky E."/>
        </authorList>
    </citation>
    <scope>NUCLEOTIDE SEQUENCE [GENOMIC DNA] (ISOFORM 1)</scope>
    <scope>VARIANTS ARG-38; ALA-235; ASN-239 AND ASP-242</scope>
    <source>
        <tissue>Brain</tissue>
    </source>
</reference>
<reference key="2">
    <citation type="journal article" date="1997" name="J. Cell Sci.">
        <title>Three mammalian SCAMPs (secretory carrier membrane proteins) are highly related products of distinct genes having similar subcellular distributions.</title>
        <authorList>
            <person name="Singleton D.R."/>
            <person name="Wu T.T."/>
            <person name="Castle J.D."/>
        </authorList>
    </citation>
    <scope>NUCLEOTIDE SEQUENCE [MRNA] (ISOFORM 1)</scope>
</reference>
<reference key="3">
    <citation type="journal article" date="2006" name="Nature">
        <title>The DNA sequence and biological annotation of human chromosome 1.</title>
        <authorList>
            <person name="Gregory S.G."/>
            <person name="Barlow K.F."/>
            <person name="McLay K.E."/>
            <person name="Kaul R."/>
            <person name="Swarbreck D."/>
            <person name="Dunham A."/>
            <person name="Scott C.E."/>
            <person name="Howe K.L."/>
            <person name="Woodfine K."/>
            <person name="Spencer C.C.A."/>
            <person name="Jones M.C."/>
            <person name="Gillson C."/>
            <person name="Searle S."/>
            <person name="Zhou Y."/>
            <person name="Kokocinski F."/>
            <person name="McDonald L."/>
            <person name="Evans R."/>
            <person name="Phillips K."/>
            <person name="Atkinson A."/>
            <person name="Cooper R."/>
            <person name="Jones C."/>
            <person name="Hall R.E."/>
            <person name="Andrews T.D."/>
            <person name="Lloyd C."/>
            <person name="Ainscough R."/>
            <person name="Almeida J.P."/>
            <person name="Ambrose K.D."/>
            <person name="Anderson F."/>
            <person name="Andrew R.W."/>
            <person name="Ashwell R.I.S."/>
            <person name="Aubin K."/>
            <person name="Babbage A.K."/>
            <person name="Bagguley C.L."/>
            <person name="Bailey J."/>
            <person name="Beasley H."/>
            <person name="Bethel G."/>
            <person name="Bird C.P."/>
            <person name="Bray-Allen S."/>
            <person name="Brown J.Y."/>
            <person name="Brown A.J."/>
            <person name="Buckley D."/>
            <person name="Burton J."/>
            <person name="Bye J."/>
            <person name="Carder C."/>
            <person name="Chapman J.C."/>
            <person name="Clark S.Y."/>
            <person name="Clarke G."/>
            <person name="Clee C."/>
            <person name="Cobley V."/>
            <person name="Collier R.E."/>
            <person name="Corby N."/>
            <person name="Coville G.J."/>
            <person name="Davies J."/>
            <person name="Deadman R."/>
            <person name="Dunn M."/>
            <person name="Earthrowl M."/>
            <person name="Ellington A.G."/>
            <person name="Errington H."/>
            <person name="Frankish A."/>
            <person name="Frankland J."/>
            <person name="French L."/>
            <person name="Garner P."/>
            <person name="Garnett J."/>
            <person name="Gay L."/>
            <person name="Ghori M.R.J."/>
            <person name="Gibson R."/>
            <person name="Gilby L.M."/>
            <person name="Gillett W."/>
            <person name="Glithero R.J."/>
            <person name="Grafham D.V."/>
            <person name="Griffiths C."/>
            <person name="Griffiths-Jones S."/>
            <person name="Grocock R."/>
            <person name="Hammond S."/>
            <person name="Harrison E.S.I."/>
            <person name="Hart E."/>
            <person name="Haugen E."/>
            <person name="Heath P.D."/>
            <person name="Holmes S."/>
            <person name="Holt K."/>
            <person name="Howden P.J."/>
            <person name="Hunt A.R."/>
            <person name="Hunt S.E."/>
            <person name="Hunter G."/>
            <person name="Isherwood J."/>
            <person name="James R."/>
            <person name="Johnson C."/>
            <person name="Johnson D."/>
            <person name="Joy A."/>
            <person name="Kay M."/>
            <person name="Kershaw J.K."/>
            <person name="Kibukawa M."/>
            <person name="Kimberley A.M."/>
            <person name="King A."/>
            <person name="Knights A.J."/>
            <person name="Lad H."/>
            <person name="Laird G."/>
            <person name="Lawlor S."/>
            <person name="Leongamornlert D.A."/>
            <person name="Lloyd D.M."/>
            <person name="Loveland J."/>
            <person name="Lovell J."/>
            <person name="Lush M.J."/>
            <person name="Lyne R."/>
            <person name="Martin S."/>
            <person name="Mashreghi-Mohammadi M."/>
            <person name="Matthews L."/>
            <person name="Matthews N.S.W."/>
            <person name="McLaren S."/>
            <person name="Milne S."/>
            <person name="Mistry S."/>
            <person name="Moore M.J.F."/>
            <person name="Nickerson T."/>
            <person name="O'Dell C.N."/>
            <person name="Oliver K."/>
            <person name="Palmeiri A."/>
            <person name="Palmer S.A."/>
            <person name="Parker A."/>
            <person name="Patel D."/>
            <person name="Pearce A.V."/>
            <person name="Peck A.I."/>
            <person name="Pelan S."/>
            <person name="Phelps K."/>
            <person name="Phillimore B.J."/>
            <person name="Plumb R."/>
            <person name="Rajan J."/>
            <person name="Raymond C."/>
            <person name="Rouse G."/>
            <person name="Saenphimmachak C."/>
            <person name="Sehra H.K."/>
            <person name="Sheridan E."/>
            <person name="Shownkeen R."/>
            <person name="Sims S."/>
            <person name="Skuce C.D."/>
            <person name="Smith M."/>
            <person name="Steward C."/>
            <person name="Subramanian S."/>
            <person name="Sycamore N."/>
            <person name="Tracey A."/>
            <person name="Tromans A."/>
            <person name="Van Helmond Z."/>
            <person name="Wall M."/>
            <person name="Wallis J.M."/>
            <person name="White S."/>
            <person name="Whitehead S.L."/>
            <person name="Wilkinson J.E."/>
            <person name="Willey D.L."/>
            <person name="Williams H."/>
            <person name="Wilming L."/>
            <person name="Wray P.W."/>
            <person name="Wu Z."/>
            <person name="Coulson A."/>
            <person name="Vaudin M."/>
            <person name="Sulston J.E."/>
            <person name="Durbin R.M."/>
            <person name="Hubbard T."/>
            <person name="Wooster R."/>
            <person name="Dunham I."/>
            <person name="Carter N.P."/>
            <person name="McVean G."/>
            <person name="Ross M.T."/>
            <person name="Harrow J."/>
            <person name="Olson M.V."/>
            <person name="Beck S."/>
            <person name="Rogers J."/>
            <person name="Bentley D.R."/>
        </authorList>
    </citation>
    <scope>NUCLEOTIDE SEQUENCE [LARGE SCALE GENOMIC DNA]</scope>
</reference>
<reference key="4">
    <citation type="submission" date="2005-09" db="EMBL/GenBank/DDBJ databases">
        <authorList>
            <person name="Mural R.J."/>
            <person name="Istrail S."/>
            <person name="Sutton G.G."/>
            <person name="Florea L."/>
            <person name="Halpern A.L."/>
            <person name="Mobarry C.M."/>
            <person name="Lippert R."/>
            <person name="Walenz B."/>
            <person name="Shatkay H."/>
            <person name="Dew I."/>
            <person name="Miller J.R."/>
            <person name="Flanigan M.J."/>
            <person name="Edwards N.J."/>
            <person name="Bolanos R."/>
            <person name="Fasulo D."/>
            <person name="Halldorsson B.V."/>
            <person name="Hannenhalli S."/>
            <person name="Turner R."/>
            <person name="Yooseph S."/>
            <person name="Lu F."/>
            <person name="Nusskern D.R."/>
            <person name="Shue B.C."/>
            <person name="Zheng X.H."/>
            <person name="Zhong F."/>
            <person name="Delcher A.L."/>
            <person name="Huson D.H."/>
            <person name="Kravitz S.A."/>
            <person name="Mouchard L."/>
            <person name="Reinert K."/>
            <person name="Remington K.A."/>
            <person name="Clark A.G."/>
            <person name="Waterman M.S."/>
            <person name="Eichler E.E."/>
            <person name="Adams M.D."/>
            <person name="Hunkapiller M.W."/>
            <person name="Myers E.W."/>
            <person name="Venter J.C."/>
        </authorList>
    </citation>
    <scope>NUCLEOTIDE SEQUENCE [LARGE SCALE GENOMIC DNA]</scope>
</reference>
<reference key="5">
    <citation type="journal article" date="2004" name="Genome Res.">
        <title>The status, quality, and expansion of the NIH full-length cDNA project: the Mammalian Gene Collection (MGC).</title>
        <authorList>
            <consortium name="The MGC Project Team"/>
        </authorList>
    </citation>
    <scope>NUCLEOTIDE SEQUENCE [LARGE SCALE MRNA] (ISOFORMS 1 AND 2)</scope>
    <source>
        <tissue>Brain</tissue>
        <tissue>Cervix</tissue>
        <tissue>Placenta</tissue>
    </source>
</reference>
<reference key="6">
    <citation type="journal article" date="2004" name="Anal. Chem.">
        <title>Robust phosphoproteomic profiling of tyrosine phosphorylation sites from human T cells using immobilized metal affinity chromatography and tandem mass spectrometry.</title>
        <authorList>
            <person name="Brill L.M."/>
            <person name="Salomon A.R."/>
            <person name="Ficarro S.B."/>
            <person name="Mukherji M."/>
            <person name="Stettler-Gill M."/>
            <person name="Peters E.C."/>
        </authorList>
    </citation>
    <scope>PHOSPHORYLATION [LARGE SCALE ANALYSIS] AT TYR-41</scope>
    <scope>IDENTIFICATION BY MASS SPECTROMETRY [LARGE SCALE ANALYSIS]</scope>
    <source>
        <tissue>Leukemic T-cell</tissue>
    </source>
</reference>
<reference key="7">
    <citation type="journal article" date="2005" name="Nat. Biotechnol.">
        <title>Immunoaffinity profiling of tyrosine phosphorylation in cancer cells.</title>
        <authorList>
            <person name="Rush J."/>
            <person name="Moritz A."/>
            <person name="Lee K.A."/>
            <person name="Guo A."/>
            <person name="Goss V.L."/>
            <person name="Spek E.J."/>
            <person name="Zhang H."/>
            <person name="Zha X.-M."/>
            <person name="Polakiewicz R.D."/>
            <person name="Comb M.J."/>
        </authorList>
    </citation>
    <scope>PHOSPHORYLATION [LARGE SCALE ANALYSIS] AT TYR-53</scope>
    <scope>IDENTIFICATION BY MASS SPECTROMETRY [LARGE SCALE ANALYSIS]</scope>
</reference>
<reference key="8">
    <citation type="journal article" date="2008" name="Proc. Natl. Acad. Sci. U.S.A.">
        <title>A quantitative atlas of mitotic phosphorylation.</title>
        <authorList>
            <person name="Dephoure N."/>
            <person name="Zhou C."/>
            <person name="Villen J."/>
            <person name="Beausoleil S.A."/>
            <person name="Bakalarski C.E."/>
            <person name="Elledge S.J."/>
            <person name="Gygi S.P."/>
        </authorList>
    </citation>
    <scope>PHOSPHORYLATION [LARGE SCALE ANALYSIS] AT SER-32 AND SER-76</scope>
    <scope>IDENTIFICATION BY MASS SPECTROMETRY [LARGE SCALE ANALYSIS]</scope>
    <source>
        <tissue>Cervix carcinoma</tissue>
    </source>
</reference>
<reference key="9">
    <citation type="journal article" date="2009" name="Mol. Biol. Cell">
        <title>SCAMP3 negatively regulates epidermal growth factor receptor degradation and promotes receptor recycling.</title>
        <authorList>
            <person name="Aoh Q.L."/>
            <person name="Castle A.M."/>
            <person name="Hubbard C.H."/>
            <person name="Katsumata O."/>
            <person name="Castle J.D."/>
        </authorList>
    </citation>
    <scope>UBIQUITINATION</scope>
    <scope>INTERACTION WITH NEDD4; NEDD4L AND TSG101</scope>
    <scope>MUTAGENESIS OF PRO-67</scope>
</reference>
<reference key="10">
    <citation type="journal article" date="2009" name="Sci. Signal.">
        <title>Quantitative phosphoproteomic analysis of T cell receptor signaling reveals system-wide modulation of protein-protein interactions.</title>
        <authorList>
            <person name="Mayya V."/>
            <person name="Lundgren D.H."/>
            <person name="Hwang S.-I."/>
            <person name="Rezaul K."/>
            <person name="Wu L."/>
            <person name="Eng J.K."/>
            <person name="Rodionov V."/>
            <person name="Han D.K."/>
        </authorList>
    </citation>
    <scope>PHOSPHORYLATION [LARGE SCALE ANALYSIS] AT SER-85</scope>
    <scope>IDENTIFICATION BY MASS SPECTROMETRY [LARGE SCALE ANALYSIS]</scope>
    <source>
        <tissue>Leukemic T-cell</tissue>
    </source>
</reference>
<reference key="11">
    <citation type="journal article" date="2010" name="Sci. Signal.">
        <title>Quantitative phosphoproteomics reveals widespread full phosphorylation site occupancy during mitosis.</title>
        <authorList>
            <person name="Olsen J.V."/>
            <person name="Vermeulen M."/>
            <person name="Santamaria A."/>
            <person name="Kumar C."/>
            <person name="Miller M.L."/>
            <person name="Jensen L.J."/>
            <person name="Gnad F."/>
            <person name="Cox J."/>
            <person name="Jensen T.S."/>
            <person name="Nigg E.A."/>
            <person name="Brunak S."/>
            <person name="Mann M."/>
        </authorList>
    </citation>
    <scope>PHOSPHORYLATION [LARGE SCALE ANALYSIS] AT SER-32</scope>
    <scope>IDENTIFICATION BY MASS SPECTROMETRY [LARGE SCALE ANALYSIS]</scope>
    <source>
        <tissue>Cervix carcinoma</tissue>
    </source>
</reference>
<reference key="12">
    <citation type="journal article" date="2011" name="BMC Syst. Biol.">
        <title>Initial characterization of the human central proteome.</title>
        <authorList>
            <person name="Burkard T.R."/>
            <person name="Planyavsky M."/>
            <person name="Kaupe I."/>
            <person name="Breitwieser F.P."/>
            <person name="Buerckstuemmer T."/>
            <person name="Bennett K.L."/>
            <person name="Superti-Furga G."/>
            <person name="Colinge J."/>
        </authorList>
    </citation>
    <scope>IDENTIFICATION BY MASS SPECTROMETRY [LARGE SCALE ANALYSIS]</scope>
</reference>
<reference key="13">
    <citation type="journal article" date="2011" name="Sci. Signal.">
        <title>System-wide temporal characterization of the proteome and phosphoproteome of human embryonic stem cell differentiation.</title>
        <authorList>
            <person name="Rigbolt K.T."/>
            <person name="Prokhorova T.A."/>
            <person name="Akimov V."/>
            <person name="Henningsen J."/>
            <person name="Johansen P.T."/>
            <person name="Kratchmarova I."/>
            <person name="Kassem M."/>
            <person name="Mann M."/>
            <person name="Olsen J.V."/>
            <person name="Blagoev B."/>
        </authorList>
    </citation>
    <scope>PHOSPHORYLATION [LARGE SCALE ANALYSIS] AT SER-76</scope>
    <scope>IDENTIFICATION BY MASS SPECTROMETRY [LARGE SCALE ANALYSIS]</scope>
</reference>
<reference key="14">
    <citation type="journal article" date="2013" name="J. Cell Sci.">
        <title>The E3 ubiquitin ligases RNF126 and Rabring7 regulate endosomal sorting of the epidermal growth factor receptor.</title>
        <authorList>
            <person name="Smith C.J."/>
            <person name="Berry D.M."/>
            <person name="McGlade C.J."/>
        </authorList>
    </citation>
    <scope>INTERACTION WITH RNF126</scope>
</reference>
<reference key="15">
    <citation type="journal article" date="2013" name="J. Proteome Res.">
        <title>Toward a comprehensive characterization of a human cancer cell phosphoproteome.</title>
        <authorList>
            <person name="Zhou H."/>
            <person name="Di Palma S."/>
            <person name="Preisinger C."/>
            <person name="Peng M."/>
            <person name="Polat A.N."/>
            <person name="Heck A.J."/>
            <person name="Mohammed S."/>
        </authorList>
    </citation>
    <scope>PHOSPHORYLATION [LARGE SCALE ANALYSIS] AT SER-32; THR-37; SER-72 AND SER-85</scope>
    <scope>IDENTIFICATION BY MASS SPECTROMETRY [LARGE SCALE ANALYSIS]</scope>
    <source>
        <tissue>Erythroleukemia</tissue>
    </source>
</reference>
<reference key="16">
    <citation type="journal article" date="2014" name="J. Proteomics">
        <title>An enzyme assisted RP-RPLC approach for in-depth analysis of human liver phosphoproteome.</title>
        <authorList>
            <person name="Bian Y."/>
            <person name="Song C."/>
            <person name="Cheng K."/>
            <person name="Dong M."/>
            <person name="Wang F."/>
            <person name="Huang J."/>
            <person name="Sun D."/>
            <person name="Wang L."/>
            <person name="Ye M."/>
            <person name="Zou H."/>
        </authorList>
    </citation>
    <scope>PHOSPHORYLATION [LARGE SCALE ANALYSIS] AT SER-32 AND SER-76</scope>
    <scope>IDENTIFICATION BY MASS SPECTROMETRY [LARGE SCALE ANALYSIS]</scope>
    <source>
        <tissue>Liver</tissue>
    </source>
</reference>
<reference key="17">
    <citation type="journal article" date="2014" name="Proc. Natl. Acad. Sci. U.S.A.">
        <title>Mapping of SUMO sites and analysis of SUMOylation changes induced by external stimuli.</title>
        <authorList>
            <person name="Impens F."/>
            <person name="Radoshevich L."/>
            <person name="Cossart P."/>
            <person name="Ribet D."/>
        </authorList>
    </citation>
    <scope>SUMOYLATION [LARGE SCALE ANALYSIS] AT LYS-313</scope>
    <scope>IDENTIFICATION BY MASS SPECTROMETRY [LARGE SCALE ANALYSIS]</scope>
</reference>
<reference key="18">
    <citation type="journal article" date="2015" name="Proteomics">
        <title>N-terminome analysis of the human mitochondrial proteome.</title>
        <authorList>
            <person name="Vaca Jacome A.S."/>
            <person name="Rabilloud T."/>
            <person name="Schaeffer-Reiss C."/>
            <person name="Rompais M."/>
            <person name="Ayoub D."/>
            <person name="Lane L."/>
            <person name="Bairoch A."/>
            <person name="Van Dorsselaer A."/>
            <person name="Carapito C."/>
        </authorList>
    </citation>
    <scope>IDENTIFICATION BY MASS SPECTROMETRY [LARGE SCALE ANALYSIS]</scope>
</reference>
<gene>
    <name type="primary">SCAMP3</name>
    <name type="synonym">C1orf3</name>
    <name type="synonym">PROPIN1</name>
</gene>
<feature type="chain" id="PRO_0000191257" description="Secretory carrier-associated membrane protein 3">
    <location>
        <begin position="1"/>
        <end position="347"/>
    </location>
</feature>
<feature type="topological domain" description="Cytoplasmic" evidence="2">
    <location>
        <begin position="1"/>
        <end position="170"/>
    </location>
</feature>
<feature type="transmembrane region" description="Helical" evidence="2">
    <location>
        <begin position="171"/>
        <end position="191"/>
    </location>
</feature>
<feature type="transmembrane region" description="Helical" evidence="2">
    <location>
        <begin position="197"/>
        <end position="217"/>
    </location>
</feature>
<feature type="transmembrane region" description="Helical" evidence="2">
    <location>
        <begin position="247"/>
        <end position="267"/>
    </location>
</feature>
<feature type="transmembrane region" description="Helical" evidence="2">
    <location>
        <begin position="277"/>
        <end position="297"/>
    </location>
</feature>
<feature type="topological domain" description="Cytoplasmic" evidence="2">
    <location>
        <begin position="298"/>
        <end position="347"/>
    </location>
</feature>
<feature type="region of interest" description="Disordered" evidence="3">
    <location>
        <begin position="1"/>
        <end position="88"/>
    </location>
</feature>
<feature type="compositionally biased region" description="Pro residues" evidence="3">
    <location>
        <begin position="49"/>
        <end position="66"/>
    </location>
</feature>
<feature type="modified residue" description="Phosphoserine" evidence="11 13 15 16">
    <location>
        <position position="32"/>
    </location>
</feature>
<feature type="modified residue" description="Phosphothreonine" evidence="15">
    <location>
        <position position="37"/>
    </location>
</feature>
<feature type="modified residue" description="Phosphotyrosine" evidence="9">
    <location>
        <position position="41"/>
    </location>
</feature>
<feature type="modified residue" description="Phosphotyrosine" evidence="10">
    <location>
        <position position="53"/>
    </location>
</feature>
<feature type="modified residue" description="Phosphoserine" evidence="15">
    <location>
        <position position="72"/>
    </location>
</feature>
<feature type="modified residue" description="Phosphoserine" evidence="11 14 16">
    <location>
        <position position="76"/>
    </location>
</feature>
<feature type="modified residue" description="Phosphotyrosine" evidence="1">
    <location>
        <position position="83"/>
    </location>
</feature>
<feature type="modified residue" description="Phosphoserine" evidence="12 15">
    <location>
        <position position="85"/>
    </location>
</feature>
<feature type="cross-link" description="Glycyl lysine isopeptide (Lys-Gly) (interchain with G-Cter in SUMO1)" evidence="17">
    <location>
        <position position="313"/>
    </location>
</feature>
<feature type="splice variant" id="VSP_004381" description="In isoform 2." evidence="7">
    <location>
        <begin position="23"/>
        <end position="48"/>
    </location>
</feature>
<feature type="sequence variant" id="VAR_011885" description="In dbSNP:rs760073." evidence="6">
    <original>L</original>
    <variation>R</variation>
    <location>
        <position position="38"/>
    </location>
</feature>
<feature type="sequence variant" id="VAR_011886" description="In dbSNP:rs1318328." evidence="6">
    <original>V</original>
    <variation>A</variation>
    <location>
        <position position="235"/>
    </location>
</feature>
<feature type="sequence variant" id="VAR_011887" description="In dbSNP:rs909106." evidence="6">
    <original>I</original>
    <variation>N</variation>
    <location>
        <position position="239"/>
    </location>
</feature>
<feature type="sequence variant" id="VAR_011888" description="In dbSNP:rs909107." evidence="6">
    <original>V</original>
    <variation>D</variation>
    <location>
        <position position="242"/>
    </location>
</feature>
<feature type="mutagenesis site" description="Abolishes interaction with TSG101." evidence="4">
    <original>P</original>
    <variation>L</variation>
    <location>
        <position position="67"/>
    </location>
</feature>
<feature type="sequence conflict" description="In Ref. 2; AAB62724." evidence="8" ref="2">
    <original>Q</original>
    <variation>R</variation>
    <location>
        <position position="3"/>
    </location>
</feature>
<feature type="sequence conflict" description="In Ref. 2; AAB62724." evidence="8" ref="2">
    <original>K</original>
    <variation>M</variation>
    <location>
        <position position="74"/>
    </location>
</feature>
<feature type="sequence conflict" description="In Ref. 1; AAC51821." evidence="8" ref="1">
    <original>A</original>
    <variation>R</variation>
    <location>
        <position position="331"/>
    </location>
</feature>
<accession>O14828</accession>
<accession>A9Z1W6</accession>
<accession>B1AVS6</accession>
<accession>O15128</accession>
<accession>Q96FR8</accession>
<accession>Q9BPY0</accession>
<comment type="function">
    <text>Functions in post-Golgi recycling pathways. Acts as a recycling carrier to the cell surface.</text>
</comment>
<comment type="subunit">
    <text evidence="4 5">Interacts with NEDD4, NEDD4L and TSG101. Interacts with RNF126.</text>
</comment>
<comment type="subcellular location">
    <subcellularLocation>
        <location>Membrane</location>
        <topology>Multi-pass membrane protein</topology>
    </subcellularLocation>
</comment>
<comment type="alternative products">
    <event type="alternative splicing"/>
    <isoform>
        <id>O14828-1</id>
        <name>1</name>
        <sequence type="displayed"/>
    </isoform>
    <isoform>
        <id>O14828-2</id>
        <name>2</name>
        <sequence type="described" ref="VSP_004381"/>
    </isoform>
</comment>
<comment type="tissue specificity">
    <text>Widely expressed, with highest expression in heart and skeletal muscle.</text>
</comment>
<comment type="PTM">
    <text>Monoubiquitinated.</text>
</comment>
<comment type="similarity">
    <text evidence="8">Belongs to the SCAMP family.</text>
</comment>